<accession>Q8XAS7</accession>
<protein>
    <recommendedName>
        <fullName evidence="1">Undecaprenyl-phosphate alpha-N-acetylglucosaminyl 1-phosphate transferase</fullName>
        <ecNumber evidence="1">2.7.8.33</ecNumber>
    </recommendedName>
    <alternativeName>
        <fullName evidence="1">UDP-GlcNAc:undecaprenyl-phosphate GlcNAc-1-phosphate transferase</fullName>
    </alternativeName>
    <alternativeName>
        <fullName evidence="1">Undecaprenyl-phosphate GlcNAc-1-phosphate transferase</fullName>
    </alternativeName>
</protein>
<gene>
    <name evidence="1" type="primary">wecA</name>
    <name type="synonym">rfe</name>
    <name type="ordered locus">Z5295</name>
    <name type="ordered locus">ECs4717</name>
</gene>
<dbReference type="EC" id="2.7.8.33" evidence="1"/>
<dbReference type="EMBL" id="AE005174">
    <property type="protein sequence ID" value="AAG58979.1"/>
    <property type="molecule type" value="Genomic_DNA"/>
</dbReference>
<dbReference type="EMBL" id="BA000007">
    <property type="protein sequence ID" value="BAB38140.1"/>
    <property type="molecule type" value="Genomic_DNA"/>
</dbReference>
<dbReference type="PIR" id="E91218">
    <property type="entry name" value="E91218"/>
</dbReference>
<dbReference type="PIR" id="G86064">
    <property type="entry name" value="G86064"/>
</dbReference>
<dbReference type="RefSeq" id="NP_312744.1">
    <property type="nucleotide sequence ID" value="NC_002695.1"/>
</dbReference>
<dbReference type="RefSeq" id="WP_001050972.1">
    <property type="nucleotide sequence ID" value="NZ_VOAI01000017.1"/>
</dbReference>
<dbReference type="SMR" id="Q8XAS7"/>
<dbReference type="STRING" id="155864.Z5295"/>
<dbReference type="GeneID" id="915248"/>
<dbReference type="KEGG" id="ece:Z5295"/>
<dbReference type="KEGG" id="ecs:ECs_4717"/>
<dbReference type="PATRIC" id="fig|386585.9.peg.4921"/>
<dbReference type="eggNOG" id="COG0472">
    <property type="taxonomic scope" value="Bacteria"/>
</dbReference>
<dbReference type="HOGENOM" id="CLU_023982_1_0_6"/>
<dbReference type="OMA" id="MCLGFLP"/>
<dbReference type="UniPathway" id="UPA00281"/>
<dbReference type="UniPathway" id="UPA00566"/>
<dbReference type="Proteomes" id="UP000000558">
    <property type="component" value="Chromosome"/>
</dbReference>
<dbReference type="Proteomes" id="UP000002519">
    <property type="component" value="Chromosome"/>
</dbReference>
<dbReference type="GO" id="GO:0009276">
    <property type="term" value="C:Gram-negative-bacterium-type cell wall"/>
    <property type="evidence" value="ECO:0000250"/>
    <property type="project" value="UniProtKB"/>
</dbReference>
<dbReference type="GO" id="GO:0005886">
    <property type="term" value="C:plasma membrane"/>
    <property type="evidence" value="ECO:0007669"/>
    <property type="project" value="UniProtKB-SubCell"/>
</dbReference>
<dbReference type="GO" id="GO:0016757">
    <property type="term" value="F:glycosyltransferase activity"/>
    <property type="evidence" value="ECO:0007669"/>
    <property type="project" value="UniProtKB-KW"/>
</dbReference>
<dbReference type="GO" id="GO:0000287">
    <property type="term" value="F:magnesium ion binding"/>
    <property type="evidence" value="ECO:0000250"/>
    <property type="project" value="UniProtKB"/>
</dbReference>
<dbReference type="GO" id="GO:0030145">
    <property type="term" value="F:manganese ion binding"/>
    <property type="evidence" value="ECO:0000250"/>
    <property type="project" value="UniProtKB"/>
</dbReference>
<dbReference type="GO" id="GO:0016780">
    <property type="term" value="F:phosphotransferase activity, for other substituted phosphate groups"/>
    <property type="evidence" value="ECO:0000250"/>
    <property type="project" value="UniProtKB"/>
</dbReference>
<dbReference type="GO" id="GO:0036380">
    <property type="term" value="F:UDP-N-acetylglucosamine-undecaprenyl-phosphate N-acetylglucosaminephosphotransferase activity"/>
    <property type="evidence" value="ECO:0007669"/>
    <property type="project" value="UniProtKB-UniRule"/>
</dbReference>
<dbReference type="GO" id="GO:0044038">
    <property type="term" value="P:cell wall macromolecule biosynthetic process"/>
    <property type="evidence" value="ECO:0000250"/>
    <property type="project" value="UniProtKB"/>
</dbReference>
<dbReference type="GO" id="GO:0071555">
    <property type="term" value="P:cell wall organization"/>
    <property type="evidence" value="ECO:0000250"/>
    <property type="project" value="UniProtKB"/>
</dbReference>
<dbReference type="GO" id="GO:0009246">
    <property type="term" value="P:enterobacterial common antigen biosynthetic process"/>
    <property type="evidence" value="ECO:0007669"/>
    <property type="project" value="UniProtKB-UniRule"/>
</dbReference>
<dbReference type="GO" id="GO:0009103">
    <property type="term" value="P:lipopolysaccharide biosynthetic process"/>
    <property type="evidence" value="ECO:0000250"/>
    <property type="project" value="UniProtKB"/>
</dbReference>
<dbReference type="GO" id="GO:0009243">
    <property type="term" value="P:O antigen biosynthetic process"/>
    <property type="evidence" value="ECO:0007669"/>
    <property type="project" value="UniProtKB-UniRule"/>
</dbReference>
<dbReference type="CDD" id="cd06853">
    <property type="entry name" value="GT_WecA_like"/>
    <property type="match status" value="1"/>
</dbReference>
<dbReference type="HAMAP" id="MF_02030">
    <property type="entry name" value="WecA_Gammaproteo"/>
    <property type="match status" value="1"/>
</dbReference>
<dbReference type="InterPro" id="IPR012750">
    <property type="entry name" value="ECA_WecA-rel"/>
</dbReference>
<dbReference type="InterPro" id="IPR000715">
    <property type="entry name" value="Glycosyl_transferase_4"/>
</dbReference>
<dbReference type="NCBIfam" id="TIGR02380">
    <property type="entry name" value="ECA_wecA"/>
    <property type="match status" value="1"/>
</dbReference>
<dbReference type="PANTHER" id="PTHR22926">
    <property type="entry name" value="PHOSPHO-N-ACETYLMURAMOYL-PENTAPEPTIDE-TRANSFERASE"/>
    <property type="match status" value="1"/>
</dbReference>
<dbReference type="PANTHER" id="PTHR22926:SF3">
    <property type="entry name" value="UNDECAPRENYL-PHOSPHATE ALPHA-N-ACETYLGLUCOSAMINYL 1-PHOSPHATE TRANSFERASE"/>
    <property type="match status" value="1"/>
</dbReference>
<dbReference type="Pfam" id="PF00953">
    <property type="entry name" value="Glycos_transf_4"/>
    <property type="match status" value="1"/>
</dbReference>
<reference key="1">
    <citation type="journal article" date="2001" name="Nature">
        <title>Genome sequence of enterohaemorrhagic Escherichia coli O157:H7.</title>
        <authorList>
            <person name="Perna N.T."/>
            <person name="Plunkett G. III"/>
            <person name="Burland V."/>
            <person name="Mau B."/>
            <person name="Glasner J.D."/>
            <person name="Rose D.J."/>
            <person name="Mayhew G.F."/>
            <person name="Evans P.S."/>
            <person name="Gregor J."/>
            <person name="Kirkpatrick H.A."/>
            <person name="Posfai G."/>
            <person name="Hackett J."/>
            <person name="Klink S."/>
            <person name="Boutin A."/>
            <person name="Shao Y."/>
            <person name="Miller L."/>
            <person name="Grotbeck E.J."/>
            <person name="Davis N.W."/>
            <person name="Lim A."/>
            <person name="Dimalanta E.T."/>
            <person name="Potamousis K."/>
            <person name="Apodaca J."/>
            <person name="Anantharaman T.S."/>
            <person name="Lin J."/>
            <person name="Yen G."/>
            <person name="Schwartz D.C."/>
            <person name="Welch R.A."/>
            <person name="Blattner F.R."/>
        </authorList>
    </citation>
    <scope>NUCLEOTIDE SEQUENCE [LARGE SCALE GENOMIC DNA]</scope>
    <source>
        <strain>O157:H7 / EDL933 / ATCC 700927 / EHEC</strain>
    </source>
</reference>
<reference key="2">
    <citation type="journal article" date="2001" name="DNA Res.">
        <title>Complete genome sequence of enterohemorrhagic Escherichia coli O157:H7 and genomic comparison with a laboratory strain K-12.</title>
        <authorList>
            <person name="Hayashi T."/>
            <person name="Makino K."/>
            <person name="Ohnishi M."/>
            <person name="Kurokawa K."/>
            <person name="Ishii K."/>
            <person name="Yokoyama K."/>
            <person name="Han C.-G."/>
            <person name="Ohtsubo E."/>
            <person name="Nakayama K."/>
            <person name="Murata T."/>
            <person name="Tanaka M."/>
            <person name="Tobe T."/>
            <person name="Iida T."/>
            <person name="Takami H."/>
            <person name="Honda T."/>
            <person name="Sasakawa C."/>
            <person name="Ogasawara N."/>
            <person name="Yasunaga T."/>
            <person name="Kuhara S."/>
            <person name="Shiba T."/>
            <person name="Hattori M."/>
            <person name="Shinagawa H."/>
        </authorList>
    </citation>
    <scope>NUCLEOTIDE SEQUENCE [LARGE SCALE GENOMIC DNA]</scope>
    <source>
        <strain>O157:H7 / Sakai / RIMD 0509952 / EHEC</strain>
    </source>
</reference>
<sequence>MNLLTVSTDLISIFLFTTLFLFFARKVAKKVGLVDKPNFRKRHQGLIPLVGGISVYAGICFTFGIVDYYIPHASLYLACAGVLVFIGALDDRFDISVKIRATIQAAVGIVMMVFGNLYLSSLGYIFGSWEMVLGPFGYFLTLFAVWAAINAFNMVDGIDGLLGGLSCVSFAAIGMILWFDGQTSLAIWCFAMIAAILPYIMLNLGILGRRYKVFMGDAGSTLIGFTVIWILLETTQGKTHPISPVTALWIIAIPLMDMVAIMYRRLRKGMSPFSPDRQHIHHLIMRAGFTSRQAFVLITLAAALLASIGVLAEYSHFVPEWVMLVLFLLAFLLYGYCIKRAWKVARFIKRVKRRLRRNRGGSPNLTK</sequence>
<comment type="function">
    <text evidence="1">Catalyzes the transfer of the GlcNAc-1-phosphate moiety from UDP-GlcNAc onto the carrier lipid undecaprenyl phosphate (C55-P), yielding GlcNAc-pyrophosphoryl-undecaprenyl (GlcNAc-PP-C55).</text>
</comment>
<comment type="catalytic activity">
    <reaction evidence="1">
        <text>di-trans,octa-cis-undecaprenyl phosphate + UDP-N-acetyl-alpha-D-glucosamine = N-acetyl-alpha-D-glucosaminyl-di-trans,octa-cis-undecaprenyl diphosphate + UMP</text>
        <dbReference type="Rhea" id="RHEA:28090"/>
        <dbReference type="ChEBI" id="CHEBI:57705"/>
        <dbReference type="ChEBI" id="CHEBI:57865"/>
        <dbReference type="ChEBI" id="CHEBI:60392"/>
        <dbReference type="ChEBI" id="CHEBI:62959"/>
        <dbReference type="EC" id="2.7.8.33"/>
    </reaction>
</comment>
<comment type="cofactor">
    <cofactor evidence="1">
        <name>Mg(2+)</name>
        <dbReference type="ChEBI" id="CHEBI:18420"/>
    </cofactor>
</comment>
<comment type="cofactor">
    <cofactor evidence="1">
        <name>Mn(2+)</name>
        <dbReference type="ChEBI" id="CHEBI:29035"/>
    </cofactor>
</comment>
<comment type="pathway">
    <text evidence="1">Bacterial outer membrane biogenesis; LPS O-antigen biosynthesis.</text>
</comment>
<comment type="pathway">
    <text evidence="1">Bacterial outer membrane biogenesis; enterobacterial common antigen biosynthesis.</text>
</comment>
<comment type="subcellular location">
    <subcellularLocation>
        <location evidence="1">Cell inner membrane</location>
        <topology evidence="1">Multi-pass membrane protein</topology>
    </subcellularLocation>
</comment>
<comment type="similarity">
    <text evidence="1">Belongs to the glycosyltransferase 4 family. WecA subfamily.</text>
</comment>
<evidence type="ECO:0000255" key="1">
    <source>
        <dbReference type="HAMAP-Rule" id="MF_02030"/>
    </source>
</evidence>
<feature type="chain" id="PRO_0000108942" description="Undecaprenyl-phosphate alpha-N-acetylglucosaminyl 1-phosphate transferase">
    <location>
        <begin position="1"/>
        <end position="367"/>
    </location>
</feature>
<feature type="transmembrane region" description="Helical" evidence="1">
    <location>
        <begin position="3"/>
        <end position="23"/>
    </location>
</feature>
<feature type="transmembrane region" description="Helical" evidence="1">
    <location>
        <begin position="46"/>
        <end position="66"/>
    </location>
</feature>
<feature type="transmembrane region" description="Helical" evidence="1">
    <location>
        <begin position="69"/>
        <end position="89"/>
    </location>
</feature>
<feature type="transmembrane region" description="Helical" evidence="1">
    <location>
        <begin position="132"/>
        <end position="152"/>
    </location>
</feature>
<feature type="transmembrane region" description="Helical" evidence="1">
    <location>
        <begin position="158"/>
        <end position="178"/>
    </location>
</feature>
<feature type="transmembrane region" description="Helical" evidence="1">
    <location>
        <begin position="187"/>
        <end position="207"/>
    </location>
</feature>
<feature type="transmembrane region" description="Helical" evidence="1">
    <location>
        <begin position="213"/>
        <end position="233"/>
    </location>
</feature>
<feature type="transmembrane region" description="Helical" evidence="1">
    <location>
        <begin position="242"/>
        <end position="262"/>
    </location>
</feature>
<feature type="transmembrane region" description="Helical" evidence="1">
    <location>
        <begin position="294"/>
        <end position="314"/>
    </location>
</feature>
<feature type="transmembrane region" description="Helical" evidence="1">
    <location>
        <begin position="318"/>
        <end position="338"/>
    </location>
</feature>
<name>WECA_ECO57</name>
<keyword id="KW-0997">Cell inner membrane</keyword>
<keyword id="KW-1003">Cell membrane</keyword>
<keyword id="KW-0328">Glycosyltransferase</keyword>
<keyword id="KW-0448">Lipopolysaccharide biosynthesis</keyword>
<keyword id="KW-0460">Magnesium</keyword>
<keyword id="KW-0464">Manganese</keyword>
<keyword id="KW-0472">Membrane</keyword>
<keyword id="KW-1185">Reference proteome</keyword>
<keyword id="KW-0808">Transferase</keyword>
<keyword id="KW-0812">Transmembrane</keyword>
<keyword id="KW-1133">Transmembrane helix</keyword>
<proteinExistence type="inferred from homology"/>
<organism>
    <name type="scientific">Escherichia coli O157:H7</name>
    <dbReference type="NCBI Taxonomy" id="83334"/>
    <lineage>
        <taxon>Bacteria</taxon>
        <taxon>Pseudomonadati</taxon>
        <taxon>Pseudomonadota</taxon>
        <taxon>Gammaproteobacteria</taxon>
        <taxon>Enterobacterales</taxon>
        <taxon>Enterobacteriaceae</taxon>
        <taxon>Escherichia</taxon>
    </lineage>
</organism>